<gene>
    <name evidence="1" type="primary">pgk2</name>
    <name type="ordered locus">MK0868</name>
</gene>
<name>PGK2_METKA</name>
<organism>
    <name type="scientific">Methanopyrus kandleri (strain AV19 / DSM 6324 / JCM 9639 / NBRC 100938)</name>
    <dbReference type="NCBI Taxonomy" id="190192"/>
    <lineage>
        <taxon>Archaea</taxon>
        <taxon>Methanobacteriati</taxon>
        <taxon>Methanobacteriota</taxon>
        <taxon>Methanomada group</taxon>
        <taxon>Methanopyri</taxon>
        <taxon>Methanopyrales</taxon>
        <taxon>Methanopyraceae</taxon>
        <taxon>Methanopyrus</taxon>
    </lineage>
</organism>
<feature type="chain" id="PRO_0000156151" description="2-phosphoglycerate kinase">
    <location>
        <begin position="1"/>
        <end position="327"/>
    </location>
</feature>
<feature type="domain" description="ATP-cone" evidence="1">
    <location>
        <begin position="25"/>
        <end position="111"/>
    </location>
</feature>
<feature type="region of interest" description="Disordered" evidence="2">
    <location>
        <begin position="1"/>
        <end position="27"/>
    </location>
</feature>
<feature type="compositionally biased region" description="Basic and acidic residues" evidence="2">
    <location>
        <begin position="1"/>
        <end position="20"/>
    </location>
</feature>
<dbReference type="EC" id="2.7.2.16" evidence="1"/>
<dbReference type="EMBL" id="AE009439">
    <property type="protein sequence ID" value="AAM02081.1"/>
    <property type="molecule type" value="Genomic_DNA"/>
</dbReference>
<dbReference type="RefSeq" id="WP_011019236.1">
    <property type="nucleotide sequence ID" value="NC_003551.1"/>
</dbReference>
<dbReference type="STRING" id="190192.MK0868"/>
<dbReference type="PaxDb" id="190192-MK0868"/>
<dbReference type="EnsemblBacteria" id="AAM02081">
    <property type="protein sequence ID" value="AAM02081"/>
    <property type="gene ID" value="MK0868"/>
</dbReference>
<dbReference type="GeneID" id="1476969"/>
<dbReference type="KEGG" id="mka:MK0868"/>
<dbReference type="HOGENOM" id="CLU_848909_0_0_2"/>
<dbReference type="InParanoid" id="Q8TGY9"/>
<dbReference type="OrthoDB" id="358692at2157"/>
<dbReference type="UniPathway" id="UPA00551">
    <property type="reaction ID" value="UER00609"/>
</dbReference>
<dbReference type="Proteomes" id="UP000001826">
    <property type="component" value="Chromosome"/>
</dbReference>
<dbReference type="GO" id="GO:0005524">
    <property type="term" value="F:ATP binding"/>
    <property type="evidence" value="ECO:0007669"/>
    <property type="project" value="UniProtKB-KW"/>
</dbReference>
<dbReference type="GO" id="GO:0016301">
    <property type="term" value="F:kinase activity"/>
    <property type="evidence" value="ECO:0007669"/>
    <property type="project" value="UniProtKB-KW"/>
</dbReference>
<dbReference type="GO" id="GO:0016774">
    <property type="term" value="F:phosphotransferase activity, carboxyl group as acceptor"/>
    <property type="evidence" value="ECO:0007669"/>
    <property type="project" value="UniProtKB-UniRule"/>
</dbReference>
<dbReference type="Gene3D" id="3.40.50.300">
    <property type="entry name" value="P-loop containing nucleotide triphosphate hydrolases"/>
    <property type="match status" value="1"/>
</dbReference>
<dbReference type="HAMAP" id="MF_00769">
    <property type="entry name" value="2PGK"/>
    <property type="match status" value="1"/>
</dbReference>
<dbReference type="InterPro" id="IPR020872">
    <property type="entry name" value="2PKG"/>
</dbReference>
<dbReference type="InterPro" id="IPR005144">
    <property type="entry name" value="ATP-cone_dom"/>
</dbReference>
<dbReference type="InterPro" id="IPR027417">
    <property type="entry name" value="P-loop_NTPase"/>
</dbReference>
<dbReference type="NCBIfam" id="NF003259">
    <property type="entry name" value="PRK04220.1"/>
    <property type="match status" value="1"/>
</dbReference>
<dbReference type="PANTHER" id="PTHR33477">
    <property type="entry name" value="P-LOOP NTPASE DOMAIN-CONTAINING PROTEIN LPA1 HOMOLOG 1"/>
    <property type="match status" value="1"/>
</dbReference>
<dbReference type="PANTHER" id="PTHR33477:SF3">
    <property type="entry name" value="P-LOOP NTPASE DOMAIN-CONTAINING PROTEIN LPA1 HOMOLOG 1"/>
    <property type="match status" value="1"/>
</dbReference>
<dbReference type="Pfam" id="PF03477">
    <property type="entry name" value="ATP-cone"/>
    <property type="match status" value="1"/>
</dbReference>
<dbReference type="SUPFAM" id="SSF52540">
    <property type="entry name" value="P-loop containing nucleoside triphosphate hydrolases"/>
    <property type="match status" value="1"/>
</dbReference>
<dbReference type="PROSITE" id="PS51161">
    <property type="entry name" value="ATP_CONE"/>
    <property type="match status" value="1"/>
</dbReference>
<evidence type="ECO:0000255" key="1">
    <source>
        <dbReference type="HAMAP-Rule" id="MF_00769"/>
    </source>
</evidence>
<evidence type="ECO:0000256" key="2">
    <source>
        <dbReference type="SAM" id="MobiDB-lite"/>
    </source>
</evidence>
<accession>Q8TGY9</accession>
<sequence length="327" mass="37960">MSEKSSRKERDEKTEKETARQGKHRRIRVKSRHYEMPFSRGVLARSLTAIGVEPHKAYEIALKIKEELQDEGIEEISTDELADIIRTKLEEIDETLAERYELWRRIKKREEPIIVLIGGASGVGTSTIASEVGHRLGITNVIGTDAIREVMRRVLAEELYPTLYESSYTAWKRLRYEPAEDPVITGFLDHSEPVVVGIEGVVNRSINEGIHVIVEGVHIVPRLIKKEILNYPNVFVFMLAVEDEEAHKWRFYARSRDTKLSRPAERYLKYFEEIRRIHDFLVEDAEEHDIPVINNEHIDETVDQIVSYISSKLLKGERELSKSVSWW</sequence>
<proteinExistence type="inferred from homology"/>
<keyword id="KW-0067">ATP-binding</keyword>
<keyword id="KW-0418">Kinase</keyword>
<keyword id="KW-0547">Nucleotide-binding</keyword>
<keyword id="KW-1185">Reference proteome</keyword>
<keyword id="KW-0808">Transferase</keyword>
<protein>
    <recommendedName>
        <fullName evidence="1">2-phosphoglycerate kinase</fullName>
        <shortName evidence="1">2PGK</shortName>
        <ecNumber evidence="1">2.7.2.16</ecNumber>
    </recommendedName>
</protein>
<comment type="function">
    <text evidence="1">Catalyzes the phosphorylation of 2-phosphoglycerate to 2,3-diphosphoglycerate. Involved in the biosynthesis of cyclic 2,3-bisphosphoglycerate, a thermoprotectant.</text>
</comment>
<comment type="catalytic activity">
    <reaction evidence="1">
        <text>(2R)-2-phosphoglycerate + ATP = (2R)-2,3-bisphosphoglycerate + ADP + H(+)</text>
        <dbReference type="Rhea" id="RHEA:42408"/>
        <dbReference type="ChEBI" id="CHEBI:15378"/>
        <dbReference type="ChEBI" id="CHEBI:30616"/>
        <dbReference type="ChEBI" id="CHEBI:58248"/>
        <dbReference type="ChEBI" id="CHEBI:58289"/>
        <dbReference type="ChEBI" id="CHEBI:456216"/>
        <dbReference type="EC" id="2.7.2.16"/>
    </reaction>
</comment>
<comment type="cofactor">
    <cofactor evidence="1">
        <name>a divalent metal cation</name>
        <dbReference type="ChEBI" id="CHEBI:60240"/>
    </cofactor>
</comment>
<comment type="pathway">
    <text evidence="1">Thermoadapter biosynthesis; cyclic 2,3-diphosphoglycerate biosynthesis; cyclic 2,3-diphosphoglycerate from 2-phospho-D-glycerate: step 1/2.</text>
</comment>
<comment type="similarity">
    <text evidence="1">Belongs to the 2-phosphoglycerate kinase family.</text>
</comment>
<reference key="1">
    <citation type="journal article" date="2002" name="Proc. Natl. Acad. Sci. U.S.A.">
        <title>The complete genome of hyperthermophile Methanopyrus kandleri AV19 and monophyly of archaeal methanogens.</title>
        <authorList>
            <person name="Slesarev A.I."/>
            <person name="Mezhevaya K.V."/>
            <person name="Makarova K.S."/>
            <person name="Polushin N.N."/>
            <person name="Shcherbinina O.V."/>
            <person name="Shakhova V.V."/>
            <person name="Belova G.I."/>
            <person name="Aravind L."/>
            <person name="Natale D.A."/>
            <person name="Rogozin I.B."/>
            <person name="Tatusov R.L."/>
            <person name="Wolf Y.I."/>
            <person name="Stetter K.O."/>
            <person name="Malykh A.G."/>
            <person name="Koonin E.V."/>
            <person name="Kozyavkin S.A."/>
        </authorList>
    </citation>
    <scope>NUCLEOTIDE SEQUENCE [LARGE SCALE GENOMIC DNA]</scope>
    <source>
        <strain>AV19 / DSM 6324 / JCM 9639 / NBRC 100938</strain>
    </source>
</reference>